<evidence type="ECO:0000250" key="1"/>
<evidence type="ECO:0000305" key="2"/>
<organism>
    <name type="scientific">Mycolicibacterium paratuberculosis (strain ATCC BAA-968 / K-10)</name>
    <name type="common">Mycobacterium paratuberculosis</name>
    <dbReference type="NCBI Taxonomy" id="262316"/>
    <lineage>
        <taxon>Bacteria</taxon>
        <taxon>Bacillati</taxon>
        <taxon>Actinomycetota</taxon>
        <taxon>Actinomycetes</taxon>
        <taxon>Mycobacteriales</taxon>
        <taxon>Mycobacteriaceae</taxon>
        <taxon>Mycobacterium</taxon>
        <taxon>Mycobacterium avium complex (MAC)</taxon>
    </lineage>
</organism>
<accession>Q73VC7</accession>
<gene>
    <name type="primary">echA17</name>
    <name type="ordered locus">MAP_3087c</name>
</gene>
<reference key="1">
    <citation type="journal article" date="2005" name="Proc. Natl. Acad. Sci. U.S.A.">
        <title>The complete genome sequence of Mycobacterium avium subspecies paratuberculosis.</title>
        <authorList>
            <person name="Li L."/>
            <person name="Bannantine J.P."/>
            <person name="Zhang Q."/>
            <person name="Amonsin A."/>
            <person name="May B.J."/>
            <person name="Alt D."/>
            <person name="Banerji N."/>
            <person name="Kanjilal S."/>
            <person name="Kapur V."/>
        </authorList>
    </citation>
    <scope>NUCLEOTIDE SEQUENCE [LARGE SCALE GENOMIC DNA]</scope>
    <source>
        <strain>ATCC BAA-968 / K-10</strain>
    </source>
</reference>
<comment type="function">
    <text evidence="1">Could possibly oxidize fatty acids using specific components.</text>
</comment>
<comment type="catalytic activity">
    <reaction>
        <text>a (3S)-3-hydroxyacyl-CoA = a (2E)-enoyl-CoA + H2O</text>
        <dbReference type="Rhea" id="RHEA:16105"/>
        <dbReference type="ChEBI" id="CHEBI:15377"/>
        <dbReference type="ChEBI" id="CHEBI:57318"/>
        <dbReference type="ChEBI" id="CHEBI:58856"/>
        <dbReference type="EC" id="4.2.1.17"/>
    </reaction>
</comment>
<comment type="catalytic activity">
    <reaction>
        <text>a 4-saturated-(3S)-3-hydroxyacyl-CoA = a (3E)-enoyl-CoA + H2O</text>
        <dbReference type="Rhea" id="RHEA:20724"/>
        <dbReference type="ChEBI" id="CHEBI:15377"/>
        <dbReference type="ChEBI" id="CHEBI:58521"/>
        <dbReference type="ChEBI" id="CHEBI:137480"/>
        <dbReference type="EC" id="4.2.1.17"/>
    </reaction>
</comment>
<comment type="similarity">
    <text evidence="2">Belongs to the enoyl-CoA hydratase/isomerase family.</text>
</comment>
<sequence length="257" mass="26738">MAALNEFVSVVVSDGSRDAGLAMLLVSRPPTNALSRQVYREVIAAADELGRRDDVAAVILFGGHEIFSAGDDMPELRTLRGAEAETAARVRRDAIDAVAAIPKPTVAAITGYALGAGLTLALAADWRISGDNVKFGATEILAGLVPGGDALARLTRVAGASKAKELVFSGRFFDAEEALALGLIDEMVAPDDVYDAAAAWARRFLDGPRHALAAAKAGVDAVFELPRAERLAAEQRRYVEVFSAGQGGDAGADPHGG</sequence>
<feature type="chain" id="PRO_0000383564" description="Probable enoyl-CoA hydratase echA17">
    <location>
        <begin position="1"/>
        <end position="257"/>
    </location>
</feature>
<feature type="site" description="Important for catalytic activity" evidence="1">
    <location>
        <position position="139"/>
    </location>
</feature>
<protein>
    <recommendedName>
        <fullName>Probable enoyl-CoA hydratase echA17</fullName>
        <ecNumber>4.2.1.17</ecNumber>
    </recommendedName>
</protein>
<keyword id="KW-0276">Fatty acid metabolism</keyword>
<keyword id="KW-0443">Lipid metabolism</keyword>
<keyword id="KW-0456">Lyase</keyword>
<keyword id="KW-1185">Reference proteome</keyword>
<name>ECH17_MYCPA</name>
<proteinExistence type="inferred from homology"/>
<dbReference type="EC" id="4.2.1.17"/>
<dbReference type="EMBL" id="AE016958">
    <property type="protein sequence ID" value="AAS05635.1"/>
    <property type="molecule type" value="Genomic_DNA"/>
</dbReference>
<dbReference type="SMR" id="Q73VC7"/>
<dbReference type="STRING" id="262316.MAP_3087c"/>
<dbReference type="KEGG" id="mpa:MAP_3087c"/>
<dbReference type="eggNOG" id="COG1024">
    <property type="taxonomic scope" value="Bacteria"/>
</dbReference>
<dbReference type="HOGENOM" id="CLU_009834_7_6_11"/>
<dbReference type="Proteomes" id="UP000000580">
    <property type="component" value="Chromosome"/>
</dbReference>
<dbReference type="GO" id="GO:0004300">
    <property type="term" value="F:enoyl-CoA hydratase activity"/>
    <property type="evidence" value="ECO:0007669"/>
    <property type="project" value="UniProtKB-EC"/>
</dbReference>
<dbReference type="GO" id="GO:0006635">
    <property type="term" value="P:fatty acid beta-oxidation"/>
    <property type="evidence" value="ECO:0007669"/>
    <property type="project" value="TreeGrafter"/>
</dbReference>
<dbReference type="CDD" id="cd06558">
    <property type="entry name" value="crotonase-like"/>
    <property type="match status" value="1"/>
</dbReference>
<dbReference type="FunFam" id="3.90.226.10:FF:000009">
    <property type="entry name" value="Carnitinyl-CoA dehydratase"/>
    <property type="match status" value="1"/>
</dbReference>
<dbReference type="Gene3D" id="3.90.226.10">
    <property type="entry name" value="2-enoyl-CoA Hydratase, Chain A, domain 1"/>
    <property type="match status" value="1"/>
</dbReference>
<dbReference type="Gene3D" id="1.10.12.10">
    <property type="entry name" value="Lyase 2-enoyl-coa Hydratase, Chain A, domain 2"/>
    <property type="match status" value="1"/>
</dbReference>
<dbReference type="InterPro" id="IPR029045">
    <property type="entry name" value="ClpP/crotonase-like_dom_sf"/>
</dbReference>
<dbReference type="InterPro" id="IPR001753">
    <property type="entry name" value="Enoyl-CoA_hydra/iso"/>
</dbReference>
<dbReference type="InterPro" id="IPR014748">
    <property type="entry name" value="Enoyl-CoA_hydra_C"/>
</dbReference>
<dbReference type="NCBIfam" id="NF004524">
    <property type="entry name" value="PRK05869.1"/>
    <property type="match status" value="1"/>
</dbReference>
<dbReference type="PANTHER" id="PTHR11941:SF169">
    <property type="entry name" value="(7AS)-7A-METHYL-1,5-DIOXO-2,3,5,6,7,7A-HEXAHYDRO-1H-INDENE-CARBOXYL-COA HYDROLASE"/>
    <property type="match status" value="1"/>
</dbReference>
<dbReference type="PANTHER" id="PTHR11941">
    <property type="entry name" value="ENOYL-COA HYDRATASE-RELATED"/>
    <property type="match status" value="1"/>
</dbReference>
<dbReference type="Pfam" id="PF00378">
    <property type="entry name" value="ECH_1"/>
    <property type="match status" value="1"/>
</dbReference>
<dbReference type="SUPFAM" id="SSF52096">
    <property type="entry name" value="ClpP/crotonase"/>
    <property type="match status" value="1"/>
</dbReference>